<reference key="1">
    <citation type="submission" date="2008-10" db="EMBL/GenBank/DDBJ databases">
        <title>Complete sequence of Desulfovibrio vulgaris str. 'Miyazaki F'.</title>
        <authorList>
            <person name="Lucas S."/>
            <person name="Copeland A."/>
            <person name="Lapidus A."/>
            <person name="Glavina del Rio T."/>
            <person name="Dalin E."/>
            <person name="Tice H."/>
            <person name="Bruce D."/>
            <person name="Goodwin L."/>
            <person name="Pitluck S."/>
            <person name="Sims D."/>
            <person name="Brettin T."/>
            <person name="Detter J.C."/>
            <person name="Han C."/>
            <person name="Larimer F."/>
            <person name="Land M."/>
            <person name="Hauser L."/>
            <person name="Kyrpides N."/>
            <person name="Mikhailova N."/>
            <person name="Hazen T.C."/>
            <person name="Richardson P."/>
        </authorList>
    </citation>
    <scope>NUCLEOTIDE SEQUENCE [LARGE SCALE GENOMIC DNA]</scope>
    <source>
        <strain>DSM 19637 / Miyazaki F</strain>
    </source>
</reference>
<organism>
    <name type="scientific">Nitratidesulfovibrio vulgaris (strain DSM 19637 / Miyazaki F)</name>
    <name type="common">Desulfovibrio vulgaris</name>
    <dbReference type="NCBI Taxonomy" id="883"/>
    <lineage>
        <taxon>Bacteria</taxon>
        <taxon>Pseudomonadati</taxon>
        <taxon>Thermodesulfobacteriota</taxon>
        <taxon>Desulfovibrionia</taxon>
        <taxon>Desulfovibrionales</taxon>
        <taxon>Desulfovibrionaceae</taxon>
        <taxon>Nitratidesulfovibrio</taxon>
    </lineage>
</organism>
<feature type="chain" id="PRO_1000196037" description="Large ribosomal subunit protein bL34">
    <location>
        <begin position="1"/>
        <end position="45"/>
    </location>
</feature>
<comment type="similarity">
    <text evidence="1">Belongs to the bacterial ribosomal protein bL34 family.</text>
</comment>
<accession>B8DP14</accession>
<name>RL34_NITV9</name>
<evidence type="ECO:0000255" key="1">
    <source>
        <dbReference type="HAMAP-Rule" id="MF_00391"/>
    </source>
</evidence>
<evidence type="ECO:0000305" key="2"/>
<keyword id="KW-0687">Ribonucleoprotein</keyword>
<keyword id="KW-0689">Ribosomal protein</keyword>
<gene>
    <name evidence="1" type="primary">rpmH</name>
    <name type="ordered locus">DvMF_0891</name>
</gene>
<protein>
    <recommendedName>
        <fullName evidence="1">Large ribosomal subunit protein bL34</fullName>
    </recommendedName>
    <alternativeName>
        <fullName evidence="2">50S ribosomal protein L34</fullName>
    </alternativeName>
</protein>
<dbReference type="EMBL" id="CP001197">
    <property type="protein sequence ID" value="ACL07846.1"/>
    <property type="molecule type" value="Genomic_DNA"/>
</dbReference>
<dbReference type="SMR" id="B8DP14"/>
<dbReference type="STRING" id="883.DvMF_0891"/>
<dbReference type="KEGG" id="dvm:DvMF_0891"/>
<dbReference type="eggNOG" id="COG0230">
    <property type="taxonomic scope" value="Bacteria"/>
</dbReference>
<dbReference type="HOGENOM" id="CLU_129938_2_0_7"/>
<dbReference type="GO" id="GO:1990904">
    <property type="term" value="C:ribonucleoprotein complex"/>
    <property type="evidence" value="ECO:0007669"/>
    <property type="project" value="UniProtKB-KW"/>
</dbReference>
<dbReference type="GO" id="GO:0005840">
    <property type="term" value="C:ribosome"/>
    <property type="evidence" value="ECO:0007669"/>
    <property type="project" value="UniProtKB-KW"/>
</dbReference>
<dbReference type="GO" id="GO:0003735">
    <property type="term" value="F:structural constituent of ribosome"/>
    <property type="evidence" value="ECO:0007669"/>
    <property type="project" value="InterPro"/>
</dbReference>
<dbReference type="GO" id="GO:0006412">
    <property type="term" value="P:translation"/>
    <property type="evidence" value="ECO:0007669"/>
    <property type="project" value="UniProtKB-UniRule"/>
</dbReference>
<dbReference type="FunFam" id="1.10.287.3980:FF:000001">
    <property type="entry name" value="Mitochondrial ribosomal protein L34"/>
    <property type="match status" value="1"/>
</dbReference>
<dbReference type="Gene3D" id="1.10.287.3980">
    <property type="match status" value="1"/>
</dbReference>
<dbReference type="HAMAP" id="MF_00391">
    <property type="entry name" value="Ribosomal_bL34"/>
    <property type="match status" value="1"/>
</dbReference>
<dbReference type="InterPro" id="IPR000271">
    <property type="entry name" value="Ribosomal_bL34"/>
</dbReference>
<dbReference type="InterPro" id="IPR020939">
    <property type="entry name" value="Ribosomal_bL34_CS"/>
</dbReference>
<dbReference type="NCBIfam" id="TIGR01030">
    <property type="entry name" value="rpmH_bact"/>
    <property type="match status" value="1"/>
</dbReference>
<dbReference type="PANTHER" id="PTHR14503:SF4">
    <property type="entry name" value="LARGE RIBOSOMAL SUBUNIT PROTEIN BL34M"/>
    <property type="match status" value="1"/>
</dbReference>
<dbReference type="PANTHER" id="PTHR14503">
    <property type="entry name" value="MITOCHONDRIAL RIBOSOMAL PROTEIN 34 FAMILY MEMBER"/>
    <property type="match status" value="1"/>
</dbReference>
<dbReference type="Pfam" id="PF00468">
    <property type="entry name" value="Ribosomal_L34"/>
    <property type="match status" value="1"/>
</dbReference>
<dbReference type="PROSITE" id="PS00784">
    <property type="entry name" value="RIBOSOMAL_L34"/>
    <property type="match status" value="1"/>
</dbReference>
<proteinExistence type="inferred from homology"/>
<sequence length="45" mass="5375">MSKRTYQPSKIRRKRTCGFRVRMSTANGRAVIRRRRAKGRKRLAL</sequence>